<reference key="1">
    <citation type="submission" date="2007-02" db="EMBL/GenBank/DDBJ databases">
        <title>Complete sequence of chromosome of Yersinia pestis Pestoides F.</title>
        <authorList>
            <consortium name="US DOE Joint Genome Institute"/>
            <person name="Copeland A."/>
            <person name="Lucas S."/>
            <person name="Lapidus A."/>
            <person name="Barry K."/>
            <person name="Detter J.C."/>
            <person name="Glavina del Rio T."/>
            <person name="Hammon N."/>
            <person name="Israni S."/>
            <person name="Dalin E."/>
            <person name="Tice H."/>
            <person name="Pitluck S."/>
            <person name="Di Bartolo G."/>
            <person name="Chain P."/>
            <person name="Malfatti S."/>
            <person name="Shin M."/>
            <person name="Vergez L."/>
            <person name="Schmutz J."/>
            <person name="Larimer F."/>
            <person name="Land M."/>
            <person name="Hauser L."/>
            <person name="Worsham P."/>
            <person name="Chu M."/>
            <person name="Bearden S."/>
            <person name="Garcia E."/>
            <person name="Richardson P."/>
        </authorList>
    </citation>
    <scope>NUCLEOTIDE SEQUENCE [LARGE SCALE GENOMIC DNA]</scope>
    <source>
        <strain>Pestoides F</strain>
    </source>
</reference>
<accession>A4TJK9</accession>
<keyword id="KW-0808">Transferase</keyword>
<keyword id="KW-0819">tRNA processing</keyword>
<sequence length="323" mass="36566">MIEFGDFYRLIAKGPLSPWLDTLPAQLSAWQRESLHGKFKTWFNAVEHLPQLTPTTLDLHSGVRAEMSPPISAGQREGMENMLRALMPWRKGPFSLYGLDIDTEWRSDWKWQRVLPHISPLAGRTILDVGCGSGYHLWRMIGEGAHLAVGIDPMQLFLCQFEAIRKLLGGDQRAHVLPLGIEQLPELAAFDTVFSMGVLYHRRSPLDHLYQLKNQLVTDGELVLETLVVEGDSQQVLVPGDRYAQMRNVYFIPSAPALKAWLEKCGFVDVRIADMAVTTTEEQRRTDWMTSESLAEFLDPHDHSKTVEGYPAPLRAVLIARKP</sequence>
<name>CMOB_YERPP</name>
<feature type="chain" id="PRO_0000313996" description="tRNA U34 carboxymethyltransferase">
    <location>
        <begin position="1"/>
        <end position="323"/>
    </location>
</feature>
<feature type="binding site" evidence="1">
    <location>
        <position position="91"/>
    </location>
    <ligand>
        <name>carboxy-S-adenosyl-L-methionine</name>
        <dbReference type="ChEBI" id="CHEBI:134278"/>
    </ligand>
</feature>
<feature type="binding site" evidence="1">
    <location>
        <position position="105"/>
    </location>
    <ligand>
        <name>carboxy-S-adenosyl-L-methionine</name>
        <dbReference type="ChEBI" id="CHEBI:134278"/>
    </ligand>
</feature>
<feature type="binding site" evidence="1">
    <location>
        <position position="110"/>
    </location>
    <ligand>
        <name>carboxy-S-adenosyl-L-methionine</name>
        <dbReference type="ChEBI" id="CHEBI:134278"/>
    </ligand>
</feature>
<feature type="binding site" evidence="1">
    <location>
        <position position="130"/>
    </location>
    <ligand>
        <name>carboxy-S-adenosyl-L-methionine</name>
        <dbReference type="ChEBI" id="CHEBI:134278"/>
    </ligand>
</feature>
<feature type="binding site" evidence="1">
    <location>
        <begin position="181"/>
        <end position="182"/>
    </location>
    <ligand>
        <name>carboxy-S-adenosyl-L-methionine</name>
        <dbReference type="ChEBI" id="CHEBI:134278"/>
    </ligand>
</feature>
<feature type="binding site" evidence="1">
    <location>
        <position position="196"/>
    </location>
    <ligand>
        <name>carboxy-S-adenosyl-L-methionine</name>
        <dbReference type="ChEBI" id="CHEBI:134278"/>
    </ligand>
</feature>
<feature type="binding site" evidence="1">
    <location>
        <position position="200"/>
    </location>
    <ligand>
        <name>carboxy-S-adenosyl-L-methionine</name>
        <dbReference type="ChEBI" id="CHEBI:134278"/>
    </ligand>
</feature>
<feature type="binding site" evidence="1">
    <location>
        <position position="315"/>
    </location>
    <ligand>
        <name>carboxy-S-adenosyl-L-methionine</name>
        <dbReference type="ChEBI" id="CHEBI:134278"/>
    </ligand>
</feature>
<evidence type="ECO:0000255" key="1">
    <source>
        <dbReference type="HAMAP-Rule" id="MF_01590"/>
    </source>
</evidence>
<comment type="function">
    <text evidence="1">Catalyzes carboxymethyl transfer from carboxy-S-adenosyl-L-methionine (Cx-SAM) to 5-hydroxyuridine (ho5U) to form 5-carboxymethoxyuridine (cmo5U) at position 34 in tRNAs.</text>
</comment>
<comment type="catalytic activity">
    <reaction evidence="1">
        <text>carboxy-S-adenosyl-L-methionine + 5-hydroxyuridine(34) in tRNA = 5-carboxymethoxyuridine(34) in tRNA + S-adenosyl-L-homocysteine + H(+)</text>
        <dbReference type="Rhea" id="RHEA:52848"/>
        <dbReference type="Rhea" id="RHEA-COMP:13381"/>
        <dbReference type="Rhea" id="RHEA-COMP:13383"/>
        <dbReference type="ChEBI" id="CHEBI:15378"/>
        <dbReference type="ChEBI" id="CHEBI:57856"/>
        <dbReference type="ChEBI" id="CHEBI:134278"/>
        <dbReference type="ChEBI" id="CHEBI:136877"/>
        <dbReference type="ChEBI" id="CHEBI:136879"/>
    </reaction>
</comment>
<comment type="subunit">
    <text evidence="1">Homotetramer.</text>
</comment>
<comment type="similarity">
    <text evidence="1">Belongs to the class I-like SAM-binding methyltransferase superfamily. CmoB family.</text>
</comment>
<protein>
    <recommendedName>
        <fullName evidence="1">tRNA U34 carboxymethyltransferase</fullName>
        <ecNumber evidence="1">2.5.1.-</ecNumber>
    </recommendedName>
</protein>
<gene>
    <name evidence="1" type="primary">cmoB</name>
    <name type="ordered locus">YPDSF_1073</name>
</gene>
<organism>
    <name type="scientific">Yersinia pestis (strain Pestoides F)</name>
    <dbReference type="NCBI Taxonomy" id="386656"/>
    <lineage>
        <taxon>Bacteria</taxon>
        <taxon>Pseudomonadati</taxon>
        <taxon>Pseudomonadota</taxon>
        <taxon>Gammaproteobacteria</taxon>
        <taxon>Enterobacterales</taxon>
        <taxon>Yersiniaceae</taxon>
        <taxon>Yersinia</taxon>
    </lineage>
</organism>
<dbReference type="EC" id="2.5.1.-" evidence="1"/>
<dbReference type="EMBL" id="CP000668">
    <property type="protein sequence ID" value="ABP39471.1"/>
    <property type="molecule type" value="Genomic_DNA"/>
</dbReference>
<dbReference type="RefSeq" id="WP_002211208.1">
    <property type="nucleotide sequence ID" value="NZ_CP009715.1"/>
</dbReference>
<dbReference type="SMR" id="A4TJK9"/>
<dbReference type="GeneID" id="57976612"/>
<dbReference type="KEGG" id="ypp:YPDSF_1073"/>
<dbReference type="PATRIC" id="fig|386656.14.peg.2760"/>
<dbReference type="GO" id="GO:0008168">
    <property type="term" value="F:methyltransferase activity"/>
    <property type="evidence" value="ECO:0007669"/>
    <property type="project" value="TreeGrafter"/>
</dbReference>
<dbReference type="GO" id="GO:0016765">
    <property type="term" value="F:transferase activity, transferring alkyl or aryl (other than methyl) groups"/>
    <property type="evidence" value="ECO:0007669"/>
    <property type="project" value="UniProtKB-UniRule"/>
</dbReference>
<dbReference type="GO" id="GO:0002098">
    <property type="term" value="P:tRNA wobble uridine modification"/>
    <property type="evidence" value="ECO:0007669"/>
    <property type="project" value="InterPro"/>
</dbReference>
<dbReference type="CDD" id="cd02440">
    <property type="entry name" value="AdoMet_MTases"/>
    <property type="match status" value="1"/>
</dbReference>
<dbReference type="Gene3D" id="3.40.50.150">
    <property type="entry name" value="Vaccinia Virus protein VP39"/>
    <property type="match status" value="1"/>
</dbReference>
<dbReference type="HAMAP" id="MF_01590">
    <property type="entry name" value="tRNA_carboxymethyltr_CmoB"/>
    <property type="match status" value="1"/>
</dbReference>
<dbReference type="InterPro" id="IPR010017">
    <property type="entry name" value="CmoB"/>
</dbReference>
<dbReference type="InterPro" id="IPR027555">
    <property type="entry name" value="Mo5U34_MeTrfas-like"/>
</dbReference>
<dbReference type="InterPro" id="IPR029063">
    <property type="entry name" value="SAM-dependent_MTases_sf"/>
</dbReference>
<dbReference type="NCBIfam" id="NF011650">
    <property type="entry name" value="PRK15068.1"/>
    <property type="match status" value="1"/>
</dbReference>
<dbReference type="NCBIfam" id="TIGR00452">
    <property type="entry name" value="tRNA 5-methoxyuridine(34)/uridine 5-oxyacetic acid(34) synthase CmoB"/>
    <property type="match status" value="1"/>
</dbReference>
<dbReference type="PANTHER" id="PTHR43464">
    <property type="entry name" value="METHYLTRANSFERASE"/>
    <property type="match status" value="1"/>
</dbReference>
<dbReference type="PANTHER" id="PTHR43464:SF95">
    <property type="entry name" value="TRNA U34 CARBOXYMETHYLTRANSFERASE"/>
    <property type="match status" value="1"/>
</dbReference>
<dbReference type="Pfam" id="PF08003">
    <property type="entry name" value="Methyltransf_9"/>
    <property type="match status" value="1"/>
</dbReference>
<dbReference type="SUPFAM" id="SSF53335">
    <property type="entry name" value="S-adenosyl-L-methionine-dependent methyltransferases"/>
    <property type="match status" value="1"/>
</dbReference>
<proteinExistence type="inferred from homology"/>